<keyword id="KW-0378">Hydrolase</keyword>
<keyword id="KW-0479">Metal-binding</keyword>
<keyword id="KW-0554">One-carbon metabolism</keyword>
<keyword id="KW-1185">Reference proteome</keyword>
<keyword id="KW-0862">Zinc</keyword>
<feature type="chain" id="PRO_1000190074" description="GTP cyclohydrolase 1">
    <location>
        <begin position="1"/>
        <end position="222"/>
    </location>
</feature>
<feature type="binding site" evidence="1">
    <location>
        <position position="111"/>
    </location>
    <ligand>
        <name>Zn(2+)</name>
        <dbReference type="ChEBI" id="CHEBI:29105"/>
    </ligand>
</feature>
<feature type="binding site" evidence="1">
    <location>
        <position position="114"/>
    </location>
    <ligand>
        <name>Zn(2+)</name>
        <dbReference type="ChEBI" id="CHEBI:29105"/>
    </ligand>
</feature>
<feature type="binding site" evidence="1">
    <location>
        <position position="182"/>
    </location>
    <ligand>
        <name>Zn(2+)</name>
        <dbReference type="ChEBI" id="CHEBI:29105"/>
    </ligand>
</feature>
<organism>
    <name type="scientific">Escherichia coli O45:K1 (strain S88 / ExPEC)</name>
    <dbReference type="NCBI Taxonomy" id="585035"/>
    <lineage>
        <taxon>Bacteria</taxon>
        <taxon>Pseudomonadati</taxon>
        <taxon>Pseudomonadota</taxon>
        <taxon>Gammaproteobacteria</taxon>
        <taxon>Enterobacterales</taxon>
        <taxon>Enterobacteriaceae</taxon>
        <taxon>Escherichia</taxon>
    </lineage>
</organism>
<name>GCH1_ECO45</name>
<accession>B7MF66</accession>
<proteinExistence type="inferred from homology"/>
<protein>
    <recommendedName>
        <fullName evidence="1">GTP cyclohydrolase 1</fullName>
        <ecNumber evidence="1">3.5.4.16</ecNumber>
    </recommendedName>
    <alternativeName>
        <fullName evidence="1">GTP cyclohydrolase I</fullName>
        <shortName evidence="1">GTP-CH-I</shortName>
    </alternativeName>
</protein>
<comment type="catalytic activity">
    <reaction evidence="1">
        <text>GTP + H2O = 7,8-dihydroneopterin 3'-triphosphate + formate + H(+)</text>
        <dbReference type="Rhea" id="RHEA:17473"/>
        <dbReference type="ChEBI" id="CHEBI:15377"/>
        <dbReference type="ChEBI" id="CHEBI:15378"/>
        <dbReference type="ChEBI" id="CHEBI:15740"/>
        <dbReference type="ChEBI" id="CHEBI:37565"/>
        <dbReference type="ChEBI" id="CHEBI:58462"/>
        <dbReference type="EC" id="3.5.4.16"/>
    </reaction>
</comment>
<comment type="pathway">
    <text evidence="1">Cofactor biosynthesis; 7,8-dihydroneopterin triphosphate biosynthesis; 7,8-dihydroneopterin triphosphate from GTP: step 1/1.</text>
</comment>
<comment type="subunit">
    <text evidence="1">Homomer.</text>
</comment>
<comment type="similarity">
    <text evidence="1">Belongs to the GTP cyclohydrolase I family.</text>
</comment>
<gene>
    <name evidence="1" type="primary">folE</name>
    <name type="ordered locus">ECS88_2300</name>
</gene>
<reference key="1">
    <citation type="journal article" date="2009" name="PLoS Genet.">
        <title>Organised genome dynamics in the Escherichia coli species results in highly diverse adaptive paths.</title>
        <authorList>
            <person name="Touchon M."/>
            <person name="Hoede C."/>
            <person name="Tenaillon O."/>
            <person name="Barbe V."/>
            <person name="Baeriswyl S."/>
            <person name="Bidet P."/>
            <person name="Bingen E."/>
            <person name="Bonacorsi S."/>
            <person name="Bouchier C."/>
            <person name="Bouvet O."/>
            <person name="Calteau A."/>
            <person name="Chiapello H."/>
            <person name="Clermont O."/>
            <person name="Cruveiller S."/>
            <person name="Danchin A."/>
            <person name="Diard M."/>
            <person name="Dossat C."/>
            <person name="Karoui M.E."/>
            <person name="Frapy E."/>
            <person name="Garry L."/>
            <person name="Ghigo J.M."/>
            <person name="Gilles A.M."/>
            <person name="Johnson J."/>
            <person name="Le Bouguenec C."/>
            <person name="Lescat M."/>
            <person name="Mangenot S."/>
            <person name="Martinez-Jehanne V."/>
            <person name="Matic I."/>
            <person name="Nassif X."/>
            <person name="Oztas S."/>
            <person name="Petit M.A."/>
            <person name="Pichon C."/>
            <person name="Rouy Z."/>
            <person name="Ruf C.S."/>
            <person name="Schneider D."/>
            <person name="Tourret J."/>
            <person name="Vacherie B."/>
            <person name="Vallenet D."/>
            <person name="Medigue C."/>
            <person name="Rocha E.P.C."/>
            <person name="Denamur E."/>
        </authorList>
    </citation>
    <scope>NUCLEOTIDE SEQUENCE [LARGE SCALE GENOMIC DNA]</scope>
    <source>
        <strain>S88 / ExPEC</strain>
    </source>
</reference>
<dbReference type="EC" id="3.5.4.16" evidence="1"/>
<dbReference type="EMBL" id="CU928161">
    <property type="protein sequence ID" value="CAR03582.1"/>
    <property type="molecule type" value="Genomic_DNA"/>
</dbReference>
<dbReference type="RefSeq" id="WP_001139613.1">
    <property type="nucleotide sequence ID" value="NC_011742.1"/>
</dbReference>
<dbReference type="SMR" id="B7MF66"/>
<dbReference type="GeneID" id="93775029"/>
<dbReference type="KEGG" id="ecz:ECS88_2300"/>
<dbReference type="HOGENOM" id="CLU_049768_3_2_6"/>
<dbReference type="UniPathway" id="UPA00848">
    <property type="reaction ID" value="UER00151"/>
</dbReference>
<dbReference type="Proteomes" id="UP000000747">
    <property type="component" value="Chromosome"/>
</dbReference>
<dbReference type="GO" id="GO:0005737">
    <property type="term" value="C:cytoplasm"/>
    <property type="evidence" value="ECO:0007669"/>
    <property type="project" value="TreeGrafter"/>
</dbReference>
<dbReference type="GO" id="GO:0005525">
    <property type="term" value="F:GTP binding"/>
    <property type="evidence" value="ECO:0007669"/>
    <property type="project" value="TreeGrafter"/>
</dbReference>
<dbReference type="GO" id="GO:0003934">
    <property type="term" value="F:GTP cyclohydrolase I activity"/>
    <property type="evidence" value="ECO:0007669"/>
    <property type="project" value="UniProtKB-UniRule"/>
</dbReference>
<dbReference type="GO" id="GO:0008270">
    <property type="term" value="F:zinc ion binding"/>
    <property type="evidence" value="ECO:0007669"/>
    <property type="project" value="UniProtKB-UniRule"/>
</dbReference>
<dbReference type="GO" id="GO:0006730">
    <property type="term" value="P:one-carbon metabolic process"/>
    <property type="evidence" value="ECO:0007669"/>
    <property type="project" value="UniProtKB-UniRule"/>
</dbReference>
<dbReference type="GO" id="GO:0006729">
    <property type="term" value="P:tetrahydrobiopterin biosynthetic process"/>
    <property type="evidence" value="ECO:0007669"/>
    <property type="project" value="TreeGrafter"/>
</dbReference>
<dbReference type="GO" id="GO:0046654">
    <property type="term" value="P:tetrahydrofolate biosynthetic process"/>
    <property type="evidence" value="ECO:0007669"/>
    <property type="project" value="UniProtKB-UniRule"/>
</dbReference>
<dbReference type="CDD" id="cd00642">
    <property type="entry name" value="GTP_cyclohydro1"/>
    <property type="match status" value="1"/>
</dbReference>
<dbReference type="FunFam" id="1.10.286.10:FF:000002">
    <property type="entry name" value="GTP cyclohydrolase 1"/>
    <property type="match status" value="1"/>
</dbReference>
<dbReference type="FunFam" id="3.30.1130.10:FF:000001">
    <property type="entry name" value="GTP cyclohydrolase 1"/>
    <property type="match status" value="1"/>
</dbReference>
<dbReference type="Gene3D" id="1.10.286.10">
    <property type="match status" value="1"/>
</dbReference>
<dbReference type="Gene3D" id="3.30.1130.10">
    <property type="match status" value="1"/>
</dbReference>
<dbReference type="HAMAP" id="MF_00223">
    <property type="entry name" value="FolE"/>
    <property type="match status" value="1"/>
</dbReference>
<dbReference type="InterPro" id="IPR043133">
    <property type="entry name" value="GTP-CH-I_C/QueF"/>
</dbReference>
<dbReference type="InterPro" id="IPR043134">
    <property type="entry name" value="GTP-CH-I_N"/>
</dbReference>
<dbReference type="InterPro" id="IPR001474">
    <property type="entry name" value="GTP_CycHdrlase_I"/>
</dbReference>
<dbReference type="InterPro" id="IPR018234">
    <property type="entry name" value="GTP_CycHdrlase_I_CS"/>
</dbReference>
<dbReference type="InterPro" id="IPR020602">
    <property type="entry name" value="GTP_CycHdrlase_I_dom"/>
</dbReference>
<dbReference type="NCBIfam" id="TIGR00063">
    <property type="entry name" value="folE"/>
    <property type="match status" value="1"/>
</dbReference>
<dbReference type="NCBIfam" id="NF006824">
    <property type="entry name" value="PRK09347.1-1"/>
    <property type="match status" value="1"/>
</dbReference>
<dbReference type="NCBIfam" id="NF006826">
    <property type="entry name" value="PRK09347.1-3"/>
    <property type="match status" value="1"/>
</dbReference>
<dbReference type="PANTHER" id="PTHR11109:SF7">
    <property type="entry name" value="GTP CYCLOHYDROLASE 1"/>
    <property type="match status" value="1"/>
</dbReference>
<dbReference type="PANTHER" id="PTHR11109">
    <property type="entry name" value="GTP CYCLOHYDROLASE I"/>
    <property type="match status" value="1"/>
</dbReference>
<dbReference type="Pfam" id="PF01227">
    <property type="entry name" value="GTP_cyclohydroI"/>
    <property type="match status" value="1"/>
</dbReference>
<dbReference type="SUPFAM" id="SSF55620">
    <property type="entry name" value="Tetrahydrobiopterin biosynthesis enzymes-like"/>
    <property type="match status" value="1"/>
</dbReference>
<dbReference type="PROSITE" id="PS00859">
    <property type="entry name" value="GTP_CYCLOHYDROL_1_1"/>
    <property type="match status" value="1"/>
</dbReference>
<dbReference type="PROSITE" id="PS00860">
    <property type="entry name" value="GTP_CYCLOHYDROL_1_2"/>
    <property type="match status" value="1"/>
</dbReference>
<evidence type="ECO:0000255" key="1">
    <source>
        <dbReference type="HAMAP-Rule" id="MF_00223"/>
    </source>
</evidence>
<sequence>MPSLSKEAALVHEALVARGLETPLRPPVHEMDNETRKSLIAGHMTEIMQLLNLDLADDSLMETPHRIAKMYVDEIFSGLDYANFPKITLIENKMKVDEMVTVRDITLTSTCEHHFVTIDGKATVAYIPKDSVIGLSKINRIVQFFAQRPQVQERLTQQILIALQTLLGTNNVAVSIDAVHYCVKARGIRDATSATTTTSLGGLFKSSQNTRHEFLRAVRHHN</sequence>